<evidence type="ECO:0000255" key="1">
    <source>
        <dbReference type="HAMAP-Rule" id="MF_01147"/>
    </source>
</evidence>
<organism>
    <name type="scientific">Finegoldia magna (strain ATCC 29328 / DSM 20472 / WAL 2508)</name>
    <name type="common">Peptostreptococcus magnus</name>
    <dbReference type="NCBI Taxonomy" id="334413"/>
    <lineage>
        <taxon>Bacteria</taxon>
        <taxon>Bacillati</taxon>
        <taxon>Bacillota</taxon>
        <taxon>Tissierellia</taxon>
        <taxon>Tissierellales</taxon>
        <taxon>Peptoniphilaceae</taxon>
        <taxon>Finegoldia</taxon>
    </lineage>
</organism>
<proteinExistence type="inferred from homology"/>
<gene>
    <name evidence="1" type="primary">lgt</name>
    <name type="ordered locus">FMG_0892</name>
</gene>
<reference key="1">
    <citation type="journal article" date="2008" name="DNA Res.">
        <title>Complete genome sequence of Finegoldia magna, an anaerobic opportunistic pathogen.</title>
        <authorList>
            <person name="Goto T."/>
            <person name="Yamashita A."/>
            <person name="Hirakawa H."/>
            <person name="Matsutani M."/>
            <person name="Todo K."/>
            <person name="Ohshima K."/>
            <person name="Toh H."/>
            <person name="Miyamoto K."/>
            <person name="Kuhara S."/>
            <person name="Hattori M."/>
            <person name="Shimizu T."/>
            <person name="Akimoto S."/>
        </authorList>
    </citation>
    <scope>NUCLEOTIDE SEQUENCE [LARGE SCALE GENOMIC DNA]</scope>
    <source>
        <strain>ATCC 29328 / DSM 20472 / WAL 2508</strain>
    </source>
</reference>
<protein>
    <recommendedName>
        <fullName evidence="1">Phosphatidylglycerol--prolipoprotein diacylglyceryl transferase</fullName>
        <ecNumber evidence="1">2.5.1.145</ecNumber>
    </recommendedName>
</protein>
<name>LGT_FINM2</name>
<comment type="function">
    <text evidence="1">Catalyzes the transfer of the diacylglyceryl group from phosphatidylglycerol to the sulfhydryl group of the N-terminal cysteine of a prolipoprotein, the first step in the formation of mature lipoproteins.</text>
</comment>
<comment type="catalytic activity">
    <reaction evidence="1">
        <text>L-cysteinyl-[prolipoprotein] + a 1,2-diacyl-sn-glycero-3-phospho-(1'-sn-glycerol) = an S-1,2-diacyl-sn-glyceryl-L-cysteinyl-[prolipoprotein] + sn-glycerol 1-phosphate + H(+)</text>
        <dbReference type="Rhea" id="RHEA:56712"/>
        <dbReference type="Rhea" id="RHEA-COMP:14679"/>
        <dbReference type="Rhea" id="RHEA-COMP:14680"/>
        <dbReference type="ChEBI" id="CHEBI:15378"/>
        <dbReference type="ChEBI" id="CHEBI:29950"/>
        <dbReference type="ChEBI" id="CHEBI:57685"/>
        <dbReference type="ChEBI" id="CHEBI:64716"/>
        <dbReference type="ChEBI" id="CHEBI:140658"/>
        <dbReference type="EC" id="2.5.1.145"/>
    </reaction>
</comment>
<comment type="pathway">
    <text evidence="1">Protein modification; lipoprotein biosynthesis (diacylglyceryl transfer).</text>
</comment>
<comment type="subcellular location">
    <subcellularLocation>
        <location evidence="1">Cell membrane</location>
        <topology evidence="1">Multi-pass membrane protein</topology>
    </subcellularLocation>
</comment>
<comment type="similarity">
    <text evidence="1">Belongs to the Lgt family.</text>
</comment>
<feature type="chain" id="PRO_1000137430" description="Phosphatidylglycerol--prolipoprotein diacylglyceryl transferase">
    <location>
        <begin position="1"/>
        <end position="248"/>
    </location>
</feature>
<feature type="transmembrane region" description="Helical" evidence="1">
    <location>
        <begin position="6"/>
        <end position="26"/>
    </location>
</feature>
<feature type="transmembrane region" description="Helical" evidence="1">
    <location>
        <begin position="48"/>
        <end position="68"/>
    </location>
</feature>
<feature type="transmembrane region" description="Helical" evidence="1">
    <location>
        <begin position="84"/>
        <end position="104"/>
    </location>
</feature>
<feature type="transmembrane region" description="Helical" evidence="1">
    <location>
        <begin position="187"/>
        <end position="207"/>
    </location>
</feature>
<feature type="transmembrane region" description="Helical" evidence="1">
    <location>
        <begin position="214"/>
        <end position="234"/>
    </location>
</feature>
<feature type="binding site" evidence="1">
    <location>
        <position position="130"/>
    </location>
    <ligand>
        <name>a 1,2-diacyl-sn-glycero-3-phospho-(1'-sn-glycerol)</name>
        <dbReference type="ChEBI" id="CHEBI:64716"/>
    </ligand>
</feature>
<dbReference type="EC" id="2.5.1.145" evidence="1"/>
<dbReference type="EMBL" id="AP008971">
    <property type="protein sequence ID" value="BAG08310.1"/>
    <property type="molecule type" value="Genomic_DNA"/>
</dbReference>
<dbReference type="RefSeq" id="WP_012290693.1">
    <property type="nucleotide sequence ID" value="NC_010376.1"/>
</dbReference>
<dbReference type="SMR" id="B0S1S0"/>
<dbReference type="STRING" id="334413.FMG_0892"/>
<dbReference type="KEGG" id="fma:FMG_0892"/>
<dbReference type="eggNOG" id="COG0682">
    <property type="taxonomic scope" value="Bacteria"/>
</dbReference>
<dbReference type="HOGENOM" id="CLU_013386_1_2_9"/>
<dbReference type="UniPathway" id="UPA00664"/>
<dbReference type="Proteomes" id="UP000001319">
    <property type="component" value="Chromosome"/>
</dbReference>
<dbReference type="GO" id="GO:0005886">
    <property type="term" value="C:plasma membrane"/>
    <property type="evidence" value="ECO:0007669"/>
    <property type="project" value="UniProtKB-SubCell"/>
</dbReference>
<dbReference type="GO" id="GO:0008961">
    <property type="term" value="F:phosphatidylglycerol-prolipoprotein diacylglyceryl transferase activity"/>
    <property type="evidence" value="ECO:0007669"/>
    <property type="project" value="UniProtKB-UniRule"/>
</dbReference>
<dbReference type="GO" id="GO:0042158">
    <property type="term" value="P:lipoprotein biosynthetic process"/>
    <property type="evidence" value="ECO:0007669"/>
    <property type="project" value="UniProtKB-UniRule"/>
</dbReference>
<dbReference type="HAMAP" id="MF_01147">
    <property type="entry name" value="Lgt"/>
    <property type="match status" value="1"/>
</dbReference>
<dbReference type="InterPro" id="IPR001640">
    <property type="entry name" value="Lgt"/>
</dbReference>
<dbReference type="NCBIfam" id="TIGR00544">
    <property type="entry name" value="lgt"/>
    <property type="match status" value="1"/>
</dbReference>
<dbReference type="PANTHER" id="PTHR30589:SF0">
    <property type="entry name" value="PHOSPHATIDYLGLYCEROL--PROLIPOPROTEIN DIACYLGLYCERYL TRANSFERASE"/>
    <property type="match status" value="1"/>
</dbReference>
<dbReference type="PANTHER" id="PTHR30589">
    <property type="entry name" value="PROLIPOPROTEIN DIACYLGLYCERYL TRANSFERASE"/>
    <property type="match status" value="1"/>
</dbReference>
<dbReference type="Pfam" id="PF01790">
    <property type="entry name" value="LGT"/>
    <property type="match status" value="1"/>
</dbReference>
<dbReference type="PROSITE" id="PS01311">
    <property type="entry name" value="LGT"/>
    <property type="match status" value="1"/>
</dbReference>
<keyword id="KW-1003">Cell membrane</keyword>
<keyword id="KW-0472">Membrane</keyword>
<keyword id="KW-1185">Reference proteome</keyword>
<keyword id="KW-0808">Transferase</keyword>
<keyword id="KW-0812">Transmembrane</keyword>
<keyword id="KW-1133">Transmembrane helix</keyword>
<sequence>MDRVAFSIFGIDIMWYGILITLGVILGYVVAVKLAKMENISENTILDILVWALPLAIVGARAYYVIFEWDYYSKNLGEIIDIRGGGLAIYGGIIAAVITCYVICKKKNLKFLKMLDIFMPAIALGQAIGRWGNFINKEAYGTPTNLPWAITIDGVKVHPTFLYESLGDFLIFLLLVYVFKNRKKFNGQITSMYMILYGILRFFVEGLRTDSLYIGALRVSQLVSIAIIIAGVILQIKYKKQIIKSDEK</sequence>
<accession>B0S1S0</accession>